<name>ILP_BRACL</name>
<sequence>MNLSSVYVLASLAVVCLLVKETQAEYLCGSTLADVLSFVCGNRGYNSQPRRSVSKRAIDFISEQQAKDYMGAMPHIRRRRGLVEECCYNVCDYSQLESYCNPYSTAPATATPVRTTEPQPEEAEDDPLDGMVGDQAPLGSIENIENLVYHYDSDDITIDAAKMEPKKLKEILGSFEDKKANPVFPFIRQSKNIKPNKFPDSFAHQFPTDLVEEEPTNEIPESPSQKPTLERLGYKHNQTDKKEPTENNNNNNRARDNRTKSSTVEPHTVPDYISKQYTHKPLITLPRGTPRRIESRDSYHLTELR</sequence>
<proteinExistence type="evidence at transcript level"/>
<protein>
    <recommendedName>
        <fullName>Insulin-like peptide</fullName>
    </recommendedName>
    <component>
        <recommendedName>
            <fullName>Insulin-like peptide B chain</fullName>
        </recommendedName>
    </component>
    <component>
        <recommendedName>
            <fullName>Insulin-like peptide A chain</fullName>
        </recommendedName>
    </component>
</protein>
<gene>
    <name type="primary">ILP</name>
</gene>
<accession>P22334</accession>
<organism>
    <name type="scientific">Branchiostoma californiense</name>
    <name type="common">California lancelet</name>
    <name type="synonym">Amphioxus</name>
    <dbReference type="NCBI Taxonomy" id="7738"/>
    <lineage>
        <taxon>Eukaryota</taxon>
        <taxon>Metazoa</taxon>
        <taxon>Chordata</taxon>
        <taxon>Cephalochordata</taxon>
        <taxon>Leptocardii</taxon>
        <taxon>Amphioxiformes</taxon>
        <taxon>Branchiostomatidae</taxon>
        <taxon>Branchiostoma</taxon>
    </lineage>
</organism>
<reference key="1">
    <citation type="journal article" date="1990" name="Proc. Natl. Acad. Sci. U.S.A.">
        <title>Evolution of the insulin superfamily: cloning of a hybrid insulin/insulin-like growth factor cDNA from amphioxus.</title>
        <authorList>
            <person name="Chan S.J."/>
            <person name="Cao Q.-P."/>
            <person name="Steiner D.F."/>
        </authorList>
    </citation>
    <scope>NUCLEOTIDE SEQUENCE [MRNA]</scope>
</reference>
<feature type="signal peptide">
    <location>
        <begin position="1"/>
        <end position="22"/>
    </location>
</feature>
<feature type="peptide" id="PRO_0000015734" description="Insulin-like peptide B chain">
    <location>
        <begin position="23"/>
        <end position="49"/>
    </location>
</feature>
<feature type="propeptide" id="PRO_0000015735" description="Connecting peptide">
    <location>
        <begin position="52"/>
        <end position="76"/>
    </location>
</feature>
<feature type="peptide" id="PRO_0000015736" description="Insulin-like peptide A chain">
    <location>
        <begin position="81"/>
        <end position="101"/>
    </location>
</feature>
<feature type="propeptide" id="PRO_0000015737" description="D/E peptide">
    <location>
        <begin position="102"/>
        <end position="305"/>
    </location>
</feature>
<feature type="region of interest" description="D">
    <location>
        <begin position="102"/>
        <end position="114"/>
    </location>
</feature>
<feature type="region of interest" description="Disordered" evidence="2">
    <location>
        <begin position="107"/>
        <end position="130"/>
    </location>
</feature>
<feature type="region of interest" description="E">
    <location>
        <begin position="115"/>
        <end position="305"/>
    </location>
</feature>
<feature type="region of interest" description="Disordered" evidence="2">
    <location>
        <begin position="236"/>
        <end position="305"/>
    </location>
</feature>
<feature type="compositionally biased region" description="Low complexity" evidence="2">
    <location>
        <begin position="107"/>
        <end position="118"/>
    </location>
</feature>
<feature type="compositionally biased region" description="Acidic residues" evidence="2">
    <location>
        <begin position="119"/>
        <end position="128"/>
    </location>
</feature>
<feature type="compositionally biased region" description="Basic and acidic residues" evidence="2">
    <location>
        <begin position="236"/>
        <end position="245"/>
    </location>
</feature>
<feature type="compositionally biased region" description="Basic and acidic residues" evidence="2">
    <location>
        <begin position="291"/>
        <end position="305"/>
    </location>
</feature>
<feature type="disulfide bond" description="Interchain (between B and A chains)" evidence="1">
    <location>
        <begin position="28"/>
        <end position="87"/>
    </location>
</feature>
<feature type="disulfide bond" description="Interchain (between B and A chains)" evidence="1">
    <location>
        <begin position="40"/>
        <end position="100"/>
    </location>
</feature>
<feature type="disulfide bond" evidence="1">
    <location>
        <begin position="86"/>
        <end position="91"/>
    </location>
</feature>
<comment type="subcellular location">
    <subcellularLocation>
        <location>Secreted</location>
    </subcellularLocation>
</comment>
<comment type="similarity">
    <text evidence="3">Belongs to the insulin family.</text>
</comment>
<dbReference type="EMBL" id="M55302">
    <property type="protein sequence ID" value="AAA62720.1"/>
    <property type="molecule type" value="mRNA"/>
</dbReference>
<dbReference type="PIR" id="A38422">
    <property type="entry name" value="A38422"/>
</dbReference>
<dbReference type="SMR" id="P22334"/>
<dbReference type="GO" id="GO:0005576">
    <property type="term" value="C:extracellular region"/>
    <property type="evidence" value="ECO:0007669"/>
    <property type="project" value="UniProtKB-SubCell"/>
</dbReference>
<dbReference type="GO" id="GO:0005179">
    <property type="term" value="F:hormone activity"/>
    <property type="evidence" value="ECO:0007669"/>
    <property type="project" value="UniProtKB-KW"/>
</dbReference>
<dbReference type="GO" id="GO:0006006">
    <property type="term" value="P:glucose metabolic process"/>
    <property type="evidence" value="ECO:0007669"/>
    <property type="project" value="UniProtKB-KW"/>
</dbReference>
<dbReference type="CDD" id="cd04367">
    <property type="entry name" value="IlGF_insulin_like"/>
    <property type="match status" value="1"/>
</dbReference>
<dbReference type="Gene3D" id="1.10.100.10">
    <property type="entry name" value="Insulin-like"/>
    <property type="match status" value="1"/>
</dbReference>
<dbReference type="InterPro" id="IPR004825">
    <property type="entry name" value="Insulin"/>
</dbReference>
<dbReference type="InterPro" id="IPR016179">
    <property type="entry name" value="Insulin-like"/>
</dbReference>
<dbReference type="InterPro" id="IPR036438">
    <property type="entry name" value="Insulin-like_sf"/>
</dbReference>
<dbReference type="InterPro" id="IPR022353">
    <property type="entry name" value="Insulin_CS"/>
</dbReference>
<dbReference type="InterPro" id="IPR022352">
    <property type="entry name" value="Insulin_family"/>
</dbReference>
<dbReference type="PANTHER" id="PTHR46886">
    <property type="entry name" value="INSULIN-LIKE GROWTH FACTOR II"/>
    <property type="match status" value="1"/>
</dbReference>
<dbReference type="PANTHER" id="PTHR46886:SF1">
    <property type="entry name" value="INSULIN-LIKE GROWTH FACTOR II"/>
    <property type="match status" value="1"/>
</dbReference>
<dbReference type="Pfam" id="PF00049">
    <property type="entry name" value="Insulin"/>
    <property type="match status" value="1"/>
</dbReference>
<dbReference type="PRINTS" id="PR00276">
    <property type="entry name" value="INSULINFAMLY"/>
</dbReference>
<dbReference type="SMART" id="SM00078">
    <property type="entry name" value="IlGF"/>
    <property type="match status" value="1"/>
</dbReference>
<dbReference type="SUPFAM" id="SSF56994">
    <property type="entry name" value="Insulin-like"/>
    <property type="match status" value="1"/>
</dbReference>
<dbReference type="PROSITE" id="PS00262">
    <property type="entry name" value="INSULIN"/>
    <property type="match status" value="1"/>
</dbReference>
<keyword id="KW-0119">Carbohydrate metabolism</keyword>
<keyword id="KW-0165">Cleavage on pair of basic residues</keyword>
<keyword id="KW-1015">Disulfide bond</keyword>
<keyword id="KW-0313">Glucose metabolism</keyword>
<keyword id="KW-0372">Hormone</keyword>
<keyword id="KW-0964">Secreted</keyword>
<keyword id="KW-0732">Signal</keyword>
<evidence type="ECO:0000250" key="1"/>
<evidence type="ECO:0000256" key="2">
    <source>
        <dbReference type="SAM" id="MobiDB-lite"/>
    </source>
</evidence>
<evidence type="ECO:0000305" key="3"/>